<evidence type="ECO:0000255" key="1">
    <source>
        <dbReference type="HAMAP-Rule" id="MF_00815"/>
    </source>
</evidence>
<proteinExistence type="inferred from homology"/>
<name>ATPG_OCEIH</name>
<reference key="1">
    <citation type="journal article" date="2002" name="Nucleic Acids Res.">
        <title>Genome sequence of Oceanobacillus iheyensis isolated from the Iheya Ridge and its unexpected adaptive capabilities to extreme environments.</title>
        <authorList>
            <person name="Takami H."/>
            <person name="Takaki Y."/>
            <person name="Uchiyama I."/>
        </authorList>
    </citation>
    <scope>NUCLEOTIDE SEQUENCE [LARGE SCALE GENOMIC DNA]</scope>
    <source>
        <strain>DSM 14371 / CIP 107618 / JCM 11309 / KCTC 3954 / HTE831</strain>
    </source>
</reference>
<feature type="chain" id="PRO_0000073332" description="ATP synthase gamma chain">
    <location>
        <begin position="1"/>
        <end position="286"/>
    </location>
</feature>
<accession>Q8EM82</accession>
<protein>
    <recommendedName>
        <fullName evidence="1">ATP synthase gamma chain</fullName>
    </recommendedName>
    <alternativeName>
        <fullName evidence="1">ATP synthase F1 sector gamma subunit</fullName>
    </alternativeName>
    <alternativeName>
        <fullName evidence="1">F-ATPase gamma subunit</fullName>
    </alternativeName>
</protein>
<sequence>MASLRELKGRIESTKKTKQITGAMQLVSASKMSKAEQNARGFVPYADKLQEVVSSIANANTDAQHPMLMKREVKKTGYLIITSDRGLVGAYNSHILKNLVNTIEKNHTSKDEYTIIVLGRKGYDYCRKRGLPVSKSVLGVPDHPTFADVKELASETVQMYADGDIDELNIIYNHYVSAISQVVTNKQLLPIDNLDESGAATSDYEFDPNQEQILEVLLPQYAESLIFGALLDGKASEHAASMTAMRSATDNASDLIDDLSLSYNRARQAAITQEITEIVGGVAALE</sequence>
<dbReference type="EMBL" id="BA000028">
    <property type="protein sequence ID" value="BAC14932.1"/>
    <property type="molecule type" value="Genomic_DNA"/>
</dbReference>
<dbReference type="RefSeq" id="WP_011067373.1">
    <property type="nucleotide sequence ID" value="NC_004193.1"/>
</dbReference>
<dbReference type="SMR" id="Q8EM82"/>
<dbReference type="STRING" id="221109.gene:10735228"/>
<dbReference type="KEGG" id="oih:OB2976"/>
<dbReference type="eggNOG" id="COG0224">
    <property type="taxonomic scope" value="Bacteria"/>
</dbReference>
<dbReference type="HOGENOM" id="CLU_050669_0_1_9"/>
<dbReference type="OrthoDB" id="9812769at2"/>
<dbReference type="PhylomeDB" id="Q8EM82"/>
<dbReference type="Proteomes" id="UP000000822">
    <property type="component" value="Chromosome"/>
</dbReference>
<dbReference type="GO" id="GO:0005886">
    <property type="term" value="C:plasma membrane"/>
    <property type="evidence" value="ECO:0007669"/>
    <property type="project" value="UniProtKB-SubCell"/>
</dbReference>
<dbReference type="GO" id="GO:0045259">
    <property type="term" value="C:proton-transporting ATP synthase complex"/>
    <property type="evidence" value="ECO:0007669"/>
    <property type="project" value="UniProtKB-KW"/>
</dbReference>
<dbReference type="GO" id="GO:0005524">
    <property type="term" value="F:ATP binding"/>
    <property type="evidence" value="ECO:0007669"/>
    <property type="project" value="UniProtKB-UniRule"/>
</dbReference>
<dbReference type="GO" id="GO:0046933">
    <property type="term" value="F:proton-transporting ATP synthase activity, rotational mechanism"/>
    <property type="evidence" value="ECO:0007669"/>
    <property type="project" value="UniProtKB-UniRule"/>
</dbReference>
<dbReference type="GO" id="GO:0042777">
    <property type="term" value="P:proton motive force-driven plasma membrane ATP synthesis"/>
    <property type="evidence" value="ECO:0007669"/>
    <property type="project" value="UniProtKB-UniRule"/>
</dbReference>
<dbReference type="CDD" id="cd12151">
    <property type="entry name" value="F1-ATPase_gamma"/>
    <property type="match status" value="1"/>
</dbReference>
<dbReference type="FunFam" id="1.10.287.80:FF:000019">
    <property type="entry name" value="ATP synthase gamma chain"/>
    <property type="match status" value="1"/>
</dbReference>
<dbReference type="FunFam" id="3.40.1380.10:FF:000002">
    <property type="entry name" value="ATP synthase gamma chain"/>
    <property type="match status" value="1"/>
</dbReference>
<dbReference type="Gene3D" id="3.40.1380.10">
    <property type="match status" value="1"/>
</dbReference>
<dbReference type="Gene3D" id="1.10.287.80">
    <property type="entry name" value="ATP synthase, gamma subunit, helix hairpin domain"/>
    <property type="match status" value="1"/>
</dbReference>
<dbReference type="HAMAP" id="MF_00815">
    <property type="entry name" value="ATP_synth_gamma_bact"/>
    <property type="match status" value="1"/>
</dbReference>
<dbReference type="InterPro" id="IPR035968">
    <property type="entry name" value="ATP_synth_F1_ATPase_gsu"/>
</dbReference>
<dbReference type="InterPro" id="IPR000131">
    <property type="entry name" value="ATP_synth_F1_gsu"/>
</dbReference>
<dbReference type="NCBIfam" id="TIGR01146">
    <property type="entry name" value="ATPsyn_F1gamma"/>
    <property type="match status" value="1"/>
</dbReference>
<dbReference type="PANTHER" id="PTHR11693">
    <property type="entry name" value="ATP SYNTHASE GAMMA CHAIN"/>
    <property type="match status" value="1"/>
</dbReference>
<dbReference type="PANTHER" id="PTHR11693:SF22">
    <property type="entry name" value="ATP SYNTHASE SUBUNIT GAMMA, MITOCHONDRIAL"/>
    <property type="match status" value="1"/>
</dbReference>
<dbReference type="Pfam" id="PF00231">
    <property type="entry name" value="ATP-synt"/>
    <property type="match status" value="1"/>
</dbReference>
<dbReference type="PRINTS" id="PR00126">
    <property type="entry name" value="ATPASEGAMMA"/>
</dbReference>
<dbReference type="SUPFAM" id="SSF52943">
    <property type="entry name" value="ATP synthase (F1-ATPase), gamma subunit"/>
    <property type="match status" value="1"/>
</dbReference>
<organism>
    <name type="scientific">Oceanobacillus iheyensis (strain DSM 14371 / CIP 107618 / JCM 11309 / KCTC 3954 / HTE831)</name>
    <dbReference type="NCBI Taxonomy" id="221109"/>
    <lineage>
        <taxon>Bacteria</taxon>
        <taxon>Bacillati</taxon>
        <taxon>Bacillota</taxon>
        <taxon>Bacilli</taxon>
        <taxon>Bacillales</taxon>
        <taxon>Bacillaceae</taxon>
        <taxon>Oceanobacillus</taxon>
    </lineage>
</organism>
<gene>
    <name evidence="1" type="primary">atpG</name>
    <name type="ordered locus">OB2976</name>
</gene>
<comment type="function">
    <text evidence="1">Produces ATP from ADP in the presence of a proton gradient across the membrane. The gamma chain is believed to be important in regulating ATPase activity and the flow of protons through the CF(0) complex.</text>
</comment>
<comment type="subunit">
    <text evidence="1">F-type ATPases have 2 components, CF(1) - the catalytic core - and CF(0) - the membrane proton channel. CF(1) has five subunits: alpha(3), beta(3), gamma(1), delta(1), epsilon(1). CF(0) has three main subunits: a, b and c.</text>
</comment>
<comment type="subcellular location">
    <subcellularLocation>
        <location evidence="1">Cell membrane</location>
        <topology evidence="1">Peripheral membrane protein</topology>
    </subcellularLocation>
</comment>
<comment type="similarity">
    <text evidence="1">Belongs to the ATPase gamma chain family.</text>
</comment>
<keyword id="KW-0066">ATP synthesis</keyword>
<keyword id="KW-1003">Cell membrane</keyword>
<keyword id="KW-0139">CF(1)</keyword>
<keyword id="KW-0375">Hydrogen ion transport</keyword>
<keyword id="KW-0406">Ion transport</keyword>
<keyword id="KW-0472">Membrane</keyword>
<keyword id="KW-1185">Reference proteome</keyword>
<keyword id="KW-0813">Transport</keyword>